<sequence>MQKLKQQVFEANMELPRYGLVTFTWGNVSAIDRERGLVVIKPSGVAYETMKADDMVVVDMSGNVVEGEYRPSSDTATHLELYRRYPSLGGIVHTHSTHATAWAQAGLAIPALGTTHADYFFGDIPCTRGLSKEEVQGEYELNTGKVIIETLGDAEPLHTPGIVVYQHGPFAWGKDAHDAVHNAVVMEEVAKMAWIARSINPQLNHIDSFLMNKHFMRKHGPNAYYGQK</sequence>
<dbReference type="EC" id="5.1.3.4" evidence="1"/>
<dbReference type="EMBL" id="CP000468">
    <property type="protein sequence ID" value="ABJ03743.1"/>
    <property type="molecule type" value="Genomic_DNA"/>
</dbReference>
<dbReference type="RefSeq" id="WP_001170855.1">
    <property type="nucleotide sequence ID" value="NZ_CADILS010000035.1"/>
</dbReference>
<dbReference type="SMR" id="A1AJA3"/>
<dbReference type="KEGG" id="ecv:APECO1_2194"/>
<dbReference type="HOGENOM" id="CLU_006033_5_0_6"/>
<dbReference type="UniPathway" id="UPA00263">
    <property type="reaction ID" value="UER00380"/>
</dbReference>
<dbReference type="Proteomes" id="UP000008216">
    <property type="component" value="Chromosome"/>
</dbReference>
<dbReference type="GO" id="GO:0005829">
    <property type="term" value="C:cytosol"/>
    <property type="evidence" value="ECO:0007669"/>
    <property type="project" value="TreeGrafter"/>
</dbReference>
<dbReference type="GO" id="GO:0016832">
    <property type="term" value="F:aldehyde-lyase activity"/>
    <property type="evidence" value="ECO:0007669"/>
    <property type="project" value="TreeGrafter"/>
</dbReference>
<dbReference type="GO" id="GO:0008742">
    <property type="term" value="F:L-ribulose-phosphate 4-epimerase activity"/>
    <property type="evidence" value="ECO:0007669"/>
    <property type="project" value="UniProtKB-UniRule"/>
</dbReference>
<dbReference type="GO" id="GO:0008270">
    <property type="term" value="F:zinc ion binding"/>
    <property type="evidence" value="ECO:0007669"/>
    <property type="project" value="UniProtKB-UniRule"/>
</dbReference>
<dbReference type="GO" id="GO:0019854">
    <property type="term" value="P:L-ascorbic acid catabolic process"/>
    <property type="evidence" value="ECO:0007669"/>
    <property type="project" value="UniProtKB-UniRule"/>
</dbReference>
<dbReference type="GO" id="GO:0019323">
    <property type="term" value="P:pentose catabolic process"/>
    <property type="evidence" value="ECO:0007669"/>
    <property type="project" value="TreeGrafter"/>
</dbReference>
<dbReference type="CDD" id="cd00398">
    <property type="entry name" value="Aldolase_II"/>
    <property type="match status" value="1"/>
</dbReference>
<dbReference type="FunFam" id="3.40.225.10:FF:000001">
    <property type="entry name" value="L-ribulose-5-phosphate 4-epimerase UlaF"/>
    <property type="match status" value="1"/>
</dbReference>
<dbReference type="Gene3D" id="3.40.225.10">
    <property type="entry name" value="Class II aldolase/adducin N-terminal domain"/>
    <property type="match status" value="1"/>
</dbReference>
<dbReference type="HAMAP" id="MF_01952">
    <property type="entry name" value="UlaF"/>
    <property type="match status" value="1"/>
</dbReference>
<dbReference type="InterPro" id="IPR050197">
    <property type="entry name" value="Aldolase_class_II_sugar_metab"/>
</dbReference>
<dbReference type="InterPro" id="IPR001303">
    <property type="entry name" value="Aldolase_II/adducin_N"/>
</dbReference>
<dbReference type="InterPro" id="IPR036409">
    <property type="entry name" value="Aldolase_II/adducin_N_sf"/>
</dbReference>
<dbReference type="InterPro" id="IPR023499">
    <property type="entry name" value="UlaF"/>
</dbReference>
<dbReference type="NCBIfam" id="NF006047">
    <property type="entry name" value="PRK08193.1"/>
    <property type="match status" value="1"/>
</dbReference>
<dbReference type="NCBIfam" id="NF009003">
    <property type="entry name" value="PRK12348.1"/>
    <property type="match status" value="1"/>
</dbReference>
<dbReference type="PANTHER" id="PTHR22789">
    <property type="entry name" value="FUCULOSE PHOSPHATE ALDOLASE"/>
    <property type="match status" value="1"/>
</dbReference>
<dbReference type="PANTHER" id="PTHR22789:SF9">
    <property type="entry name" value="L-RIBULOSE-5-PHOSPHATE 4-EPIMERASE ULAF"/>
    <property type="match status" value="1"/>
</dbReference>
<dbReference type="Pfam" id="PF00596">
    <property type="entry name" value="Aldolase_II"/>
    <property type="match status" value="1"/>
</dbReference>
<dbReference type="SMART" id="SM01007">
    <property type="entry name" value="Aldolase_II"/>
    <property type="match status" value="1"/>
</dbReference>
<dbReference type="SUPFAM" id="SSF53639">
    <property type="entry name" value="AraD/HMP-PK domain-like"/>
    <property type="match status" value="1"/>
</dbReference>
<proteinExistence type="inferred from homology"/>
<comment type="function">
    <text evidence="1">Catalyzes the isomerization of L-ribulose 5-phosphate to D-xylulose 5-phosphate. Is involved in the anaerobic L-ascorbate utilization.</text>
</comment>
<comment type="catalytic activity">
    <reaction evidence="1">
        <text>L-ribulose 5-phosphate = D-xylulose 5-phosphate</text>
        <dbReference type="Rhea" id="RHEA:22368"/>
        <dbReference type="ChEBI" id="CHEBI:57737"/>
        <dbReference type="ChEBI" id="CHEBI:58226"/>
        <dbReference type="EC" id="5.1.3.4"/>
    </reaction>
</comment>
<comment type="cofactor">
    <cofactor evidence="1">
        <name>Zn(2+)</name>
        <dbReference type="ChEBI" id="CHEBI:29105"/>
    </cofactor>
    <text evidence="1">Binds 1 zinc ion per subunit.</text>
</comment>
<comment type="pathway">
    <text evidence="1">Cofactor degradation; L-ascorbate degradation; D-xylulose 5-phosphate from L-ascorbate: step 4/4.</text>
</comment>
<comment type="induction">
    <text evidence="1">Induced by L-ascorbate. Repressed by UlaR.</text>
</comment>
<comment type="similarity">
    <text evidence="1">Belongs to the aldolase class II family. AraD/FucA subfamily.</text>
</comment>
<keyword id="KW-0119">Carbohydrate metabolism</keyword>
<keyword id="KW-0413">Isomerase</keyword>
<keyword id="KW-0479">Metal-binding</keyword>
<keyword id="KW-1185">Reference proteome</keyword>
<keyword id="KW-0862">Zinc</keyword>
<protein>
    <recommendedName>
        <fullName evidence="1">L-ribulose-5-phosphate 4-epimerase UlaF</fullName>
        <ecNumber evidence="1">5.1.3.4</ecNumber>
    </recommendedName>
    <alternativeName>
        <fullName evidence="1">L-ascorbate utilization protein F</fullName>
    </alternativeName>
    <alternativeName>
        <fullName evidence="1">Phosphoribulose isomerase</fullName>
    </alternativeName>
</protein>
<feature type="chain" id="PRO_1000070638" description="L-ribulose-5-phosphate 4-epimerase UlaF">
    <location>
        <begin position="1"/>
        <end position="228"/>
    </location>
</feature>
<feature type="active site" description="Proton donor/acceptor" evidence="1">
    <location>
        <position position="118"/>
    </location>
</feature>
<feature type="active site" description="Proton donor/acceptor" evidence="1">
    <location>
        <position position="225"/>
    </location>
</feature>
<feature type="binding site" evidence="1">
    <location>
        <begin position="26"/>
        <end position="27"/>
    </location>
    <ligand>
        <name>substrate</name>
    </ligand>
</feature>
<feature type="binding site" evidence="1">
    <location>
        <begin position="43"/>
        <end position="44"/>
    </location>
    <ligand>
        <name>substrate</name>
    </ligand>
</feature>
<feature type="binding site" evidence="1">
    <location>
        <begin position="72"/>
        <end position="73"/>
    </location>
    <ligand>
        <name>substrate</name>
    </ligand>
</feature>
<feature type="binding site" evidence="1">
    <location>
        <position position="74"/>
    </location>
    <ligand>
        <name>Zn(2+)</name>
        <dbReference type="ChEBI" id="CHEBI:29105"/>
    </ligand>
</feature>
<feature type="binding site" evidence="1">
    <location>
        <position position="93"/>
    </location>
    <ligand>
        <name>Zn(2+)</name>
        <dbReference type="ChEBI" id="CHEBI:29105"/>
    </ligand>
</feature>
<feature type="binding site" evidence="1">
    <location>
        <position position="95"/>
    </location>
    <ligand>
        <name>Zn(2+)</name>
        <dbReference type="ChEBI" id="CHEBI:29105"/>
    </ligand>
</feature>
<feature type="binding site" evidence="1">
    <location>
        <position position="167"/>
    </location>
    <ligand>
        <name>Zn(2+)</name>
        <dbReference type="ChEBI" id="CHEBI:29105"/>
    </ligand>
</feature>
<gene>
    <name evidence="1" type="primary">ulaF</name>
    <name type="ordered locus">Ecok1_42490</name>
    <name type="ORF">APECO1_2194</name>
</gene>
<organism>
    <name type="scientific">Escherichia coli O1:K1 / APEC</name>
    <dbReference type="NCBI Taxonomy" id="405955"/>
    <lineage>
        <taxon>Bacteria</taxon>
        <taxon>Pseudomonadati</taxon>
        <taxon>Pseudomonadota</taxon>
        <taxon>Gammaproteobacteria</taxon>
        <taxon>Enterobacterales</taxon>
        <taxon>Enterobacteriaceae</taxon>
        <taxon>Escherichia</taxon>
    </lineage>
</organism>
<accession>A1AJA3</accession>
<evidence type="ECO:0000255" key="1">
    <source>
        <dbReference type="HAMAP-Rule" id="MF_01952"/>
    </source>
</evidence>
<reference key="1">
    <citation type="journal article" date="2007" name="J. Bacteriol.">
        <title>The genome sequence of avian pathogenic Escherichia coli strain O1:K1:H7 shares strong similarities with human extraintestinal pathogenic E. coli genomes.</title>
        <authorList>
            <person name="Johnson T.J."/>
            <person name="Kariyawasam S."/>
            <person name="Wannemuehler Y."/>
            <person name="Mangiamele P."/>
            <person name="Johnson S.J."/>
            <person name="Doetkott C."/>
            <person name="Skyberg J.A."/>
            <person name="Lynne A.M."/>
            <person name="Johnson J.R."/>
            <person name="Nolan L.K."/>
        </authorList>
    </citation>
    <scope>NUCLEOTIDE SEQUENCE [LARGE SCALE GENOMIC DNA]</scope>
</reference>
<name>ULAF_ECOK1</name>